<name>SELD_PSEOC</name>
<gene>
    <name evidence="1" type="primary">selD</name>
</gene>
<accession>Q9AQI4</accession>
<organism>
    <name type="scientific">Pseudomonas straminea</name>
    <dbReference type="NCBI Taxonomy" id="47882"/>
    <lineage>
        <taxon>Bacteria</taxon>
        <taxon>Pseudomonadati</taxon>
        <taxon>Pseudomonadota</taxon>
        <taxon>Gammaproteobacteria</taxon>
        <taxon>Pseudomonadales</taxon>
        <taxon>Pseudomonadaceae</taxon>
        <taxon>Phytopseudomonas</taxon>
    </lineage>
</organism>
<comment type="function">
    <text evidence="1">Synthesizes selenophosphate from selenide and ATP.</text>
</comment>
<comment type="catalytic activity">
    <reaction evidence="1">
        <text>hydrogenselenide + ATP + H2O = selenophosphate + AMP + phosphate + 2 H(+)</text>
        <dbReference type="Rhea" id="RHEA:18737"/>
        <dbReference type="ChEBI" id="CHEBI:15377"/>
        <dbReference type="ChEBI" id="CHEBI:15378"/>
        <dbReference type="ChEBI" id="CHEBI:16144"/>
        <dbReference type="ChEBI" id="CHEBI:29317"/>
        <dbReference type="ChEBI" id="CHEBI:30616"/>
        <dbReference type="ChEBI" id="CHEBI:43474"/>
        <dbReference type="ChEBI" id="CHEBI:456215"/>
        <dbReference type="EC" id="2.7.9.3"/>
    </reaction>
</comment>
<comment type="cofactor">
    <cofactor evidence="1">
        <name>Mg(2+)</name>
        <dbReference type="ChEBI" id="CHEBI:18420"/>
    </cofactor>
    <text evidence="1">Binds 1 Mg(2+) ion per monomer.</text>
</comment>
<comment type="subunit">
    <text evidence="1">Homodimer.</text>
</comment>
<comment type="similarity">
    <text evidence="1">Belongs to the selenophosphate synthase 1 family. Class I subfamily.</text>
</comment>
<reference key="1">
    <citation type="journal article" date="2001" name="Biosci. Biotechnol. Biochem.">
        <title>Cloning, sequencing, and expression of the gene encoding 4-hydroxy-4-methyl-2-oxoglutarate aldolase from Pseudomonas ochraceae NGJ1.</title>
        <authorList>
            <person name="Maruyama K."/>
            <person name="Miwa M."/>
            <person name="Tsujii N."/>
            <person name="Nagai T."/>
            <person name="Tomita N."/>
            <person name="Harada T."/>
            <person name="Sobajima H."/>
            <person name="Sugisaki H."/>
        </authorList>
    </citation>
    <scope>NUCLEOTIDE SEQUENCE [GENOMIC DNA]</scope>
    <source>
        <strain>NGJ1</strain>
    </source>
</reference>
<evidence type="ECO:0000255" key="1">
    <source>
        <dbReference type="HAMAP-Rule" id="MF_00625"/>
    </source>
</evidence>
<dbReference type="EC" id="2.7.9.3" evidence="1"/>
<dbReference type="EMBL" id="AB050935">
    <property type="protein sequence ID" value="BAB32693.1"/>
    <property type="molecule type" value="Genomic_DNA"/>
</dbReference>
<dbReference type="SMR" id="Q9AQI4"/>
<dbReference type="GO" id="GO:0005737">
    <property type="term" value="C:cytoplasm"/>
    <property type="evidence" value="ECO:0007669"/>
    <property type="project" value="TreeGrafter"/>
</dbReference>
<dbReference type="GO" id="GO:0005524">
    <property type="term" value="F:ATP binding"/>
    <property type="evidence" value="ECO:0007669"/>
    <property type="project" value="UniProtKB-UniRule"/>
</dbReference>
<dbReference type="GO" id="GO:0000287">
    <property type="term" value="F:magnesium ion binding"/>
    <property type="evidence" value="ECO:0007669"/>
    <property type="project" value="UniProtKB-UniRule"/>
</dbReference>
<dbReference type="GO" id="GO:0004756">
    <property type="term" value="F:selenide, water dikinase activity"/>
    <property type="evidence" value="ECO:0007669"/>
    <property type="project" value="UniProtKB-UniRule"/>
</dbReference>
<dbReference type="GO" id="GO:0016260">
    <property type="term" value="P:selenocysteine biosynthetic process"/>
    <property type="evidence" value="ECO:0007669"/>
    <property type="project" value="InterPro"/>
</dbReference>
<dbReference type="CDD" id="cd02195">
    <property type="entry name" value="SelD"/>
    <property type="match status" value="1"/>
</dbReference>
<dbReference type="FunFam" id="3.30.1330.10:FF:000003">
    <property type="entry name" value="Selenide, water dikinase"/>
    <property type="match status" value="1"/>
</dbReference>
<dbReference type="FunFam" id="3.90.650.10:FF:000004">
    <property type="entry name" value="Selenide, water dikinase"/>
    <property type="match status" value="1"/>
</dbReference>
<dbReference type="Gene3D" id="3.90.650.10">
    <property type="entry name" value="PurM-like C-terminal domain"/>
    <property type="match status" value="1"/>
</dbReference>
<dbReference type="Gene3D" id="3.30.1330.10">
    <property type="entry name" value="PurM-like, N-terminal domain"/>
    <property type="match status" value="1"/>
</dbReference>
<dbReference type="HAMAP" id="MF_00625">
    <property type="entry name" value="SelD"/>
    <property type="match status" value="1"/>
</dbReference>
<dbReference type="InterPro" id="IPR010918">
    <property type="entry name" value="PurM-like_C_dom"/>
</dbReference>
<dbReference type="InterPro" id="IPR036676">
    <property type="entry name" value="PurM-like_C_sf"/>
</dbReference>
<dbReference type="InterPro" id="IPR016188">
    <property type="entry name" value="PurM-like_N"/>
</dbReference>
<dbReference type="InterPro" id="IPR036921">
    <property type="entry name" value="PurM-like_N_sf"/>
</dbReference>
<dbReference type="InterPro" id="IPR023061">
    <property type="entry name" value="SelD_I"/>
</dbReference>
<dbReference type="InterPro" id="IPR004536">
    <property type="entry name" value="SPS/SelD"/>
</dbReference>
<dbReference type="NCBIfam" id="NF002098">
    <property type="entry name" value="PRK00943.1"/>
    <property type="match status" value="1"/>
</dbReference>
<dbReference type="NCBIfam" id="TIGR00476">
    <property type="entry name" value="selD"/>
    <property type="match status" value="1"/>
</dbReference>
<dbReference type="PANTHER" id="PTHR10256:SF0">
    <property type="entry name" value="INACTIVE SELENIDE, WATER DIKINASE-LIKE PROTEIN-RELATED"/>
    <property type="match status" value="1"/>
</dbReference>
<dbReference type="PANTHER" id="PTHR10256">
    <property type="entry name" value="SELENIDE, WATER DIKINASE"/>
    <property type="match status" value="1"/>
</dbReference>
<dbReference type="Pfam" id="PF00586">
    <property type="entry name" value="AIRS"/>
    <property type="match status" value="1"/>
</dbReference>
<dbReference type="Pfam" id="PF02769">
    <property type="entry name" value="AIRS_C"/>
    <property type="match status" value="1"/>
</dbReference>
<dbReference type="PIRSF" id="PIRSF036407">
    <property type="entry name" value="Selenphspht_syn"/>
    <property type="match status" value="1"/>
</dbReference>
<dbReference type="SUPFAM" id="SSF56042">
    <property type="entry name" value="PurM C-terminal domain-like"/>
    <property type="match status" value="1"/>
</dbReference>
<dbReference type="SUPFAM" id="SSF55326">
    <property type="entry name" value="PurM N-terminal domain-like"/>
    <property type="match status" value="1"/>
</dbReference>
<feature type="chain" id="PRO_0000127633" description="Selenide, water dikinase">
    <location>
        <begin position="1"/>
        <end position="357"/>
    </location>
</feature>
<feature type="active site" evidence="1">
    <location>
        <position position="25"/>
    </location>
</feature>
<feature type="binding site" description="in other chain" evidence="1">
    <location>
        <position position="28"/>
    </location>
    <ligand>
        <name>ATP</name>
        <dbReference type="ChEBI" id="CHEBI:30616"/>
        <note>ligand shared between dimeric partners</note>
    </ligand>
</feature>
<feature type="binding site" description="in other chain" evidence="1">
    <location>
        <begin position="57"/>
        <end position="59"/>
    </location>
    <ligand>
        <name>ATP</name>
        <dbReference type="ChEBI" id="CHEBI:30616"/>
        <note>ligand shared between dimeric partners</note>
    </ligand>
</feature>
<feature type="binding site" evidence="1">
    <location>
        <position position="60"/>
    </location>
    <ligand>
        <name>Mg(2+)</name>
        <dbReference type="ChEBI" id="CHEBI:18420"/>
    </ligand>
</feature>
<feature type="binding site" description="in other chain" evidence="1">
    <location>
        <position position="77"/>
    </location>
    <ligand>
        <name>ATP</name>
        <dbReference type="ChEBI" id="CHEBI:30616"/>
        <note>ligand shared between dimeric partners</note>
    </ligand>
</feature>
<feature type="binding site" description="in other chain" evidence="1">
    <location>
        <position position="100"/>
    </location>
    <ligand>
        <name>ATP</name>
        <dbReference type="ChEBI" id="CHEBI:30616"/>
        <note>ligand shared between dimeric partners</note>
    </ligand>
</feature>
<feature type="binding site" evidence="1">
    <location>
        <position position="100"/>
    </location>
    <ligand>
        <name>Mg(2+)</name>
        <dbReference type="ChEBI" id="CHEBI:18420"/>
    </ligand>
</feature>
<feature type="binding site" evidence="1">
    <location>
        <begin position="148"/>
        <end position="150"/>
    </location>
    <ligand>
        <name>ATP</name>
        <dbReference type="ChEBI" id="CHEBI:30616"/>
        <note>ligand shared between dimeric partners</note>
    </ligand>
</feature>
<feature type="binding site" evidence="1">
    <location>
        <position position="236"/>
    </location>
    <ligand>
        <name>Mg(2+)</name>
        <dbReference type="ChEBI" id="CHEBI:18420"/>
    </ligand>
</feature>
<feature type="site" description="Important for catalytic activity" evidence="1">
    <location>
        <position position="28"/>
    </location>
</feature>
<proteinExistence type="inferred from homology"/>
<keyword id="KW-0067">ATP-binding</keyword>
<keyword id="KW-0418">Kinase</keyword>
<keyword id="KW-0460">Magnesium</keyword>
<keyword id="KW-0479">Metal-binding</keyword>
<keyword id="KW-0547">Nucleotide-binding</keyword>
<keyword id="KW-0711">Selenium</keyword>
<keyword id="KW-0808">Transferase</keyword>
<sequence>MNSDISNISLDATPRLTSLSHGGGCGCKIAPGVLSELLAKSNLPKQFFPDLLVGTETADDAAVYKINDEQAIVATTDFFMPIVDDPYDFGRIAATNALSDIYAMGGTPLMALAIVGMPINVLPHDVIAKILEGGESVCRDAGIPLAGGHSIDSVEPIYGLVGIGIVNPKQMKRNADAKDGDVLILGKPLGVGILSAALKKNLLDDAGYRAMVDATTKLNRPGTELAKLDGVHALTDVTGFGLLGHGLELARGAQLSARIDSAKLPMLPGVQALAEQGIFTGASGRNWASYGEHVELASSLTDAQKALLTDPQTSGGLLVSCTQDVVHQVLQVFADSGFAEAAVIGRMEAGAPKVFVG</sequence>
<protein>
    <recommendedName>
        <fullName evidence="1">Selenide, water dikinase</fullName>
        <ecNumber evidence="1">2.7.9.3</ecNumber>
    </recommendedName>
    <alternativeName>
        <fullName evidence="1">Selenium donor protein</fullName>
    </alternativeName>
    <alternativeName>
        <fullName evidence="1">Selenophosphate synthase</fullName>
    </alternativeName>
</protein>